<gene>
    <name evidence="1" type="primary">panD</name>
    <name type="ordered locus">SAOUHSC_02916</name>
</gene>
<accession>Q2FV23</accession>
<comment type="function">
    <text evidence="1">Catalyzes the pyruvoyl-dependent decarboxylation of aspartate to produce beta-alanine.</text>
</comment>
<comment type="catalytic activity">
    <reaction evidence="1">
        <text>L-aspartate + H(+) = beta-alanine + CO2</text>
        <dbReference type="Rhea" id="RHEA:19497"/>
        <dbReference type="ChEBI" id="CHEBI:15378"/>
        <dbReference type="ChEBI" id="CHEBI:16526"/>
        <dbReference type="ChEBI" id="CHEBI:29991"/>
        <dbReference type="ChEBI" id="CHEBI:57966"/>
        <dbReference type="EC" id="4.1.1.11"/>
    </reaction>
</comment>
<comment type="cofactor">
    <cofactor evidence="1">
        <name>pyruvate</name>
        <dbReference type="ChEBI" id="CHEBI:15361"/>
    </cofactor>
    <text evidence="1">Binds 1 pyruvoyl group covalently per subunit.</text>
</comment>
<comment type="pathway">
    <text evidence="1">Cofactor biosynthesis; (R)-pantothenate biosynthesis; beta-alanine from L-aspartate: step 1/1.</text>
</comment>
<comment type="subunit">
    <text evidence="1">Heterooctamer of four alpha and four beta subunits.</text>
</comment>
<comment type="subcellular location">
    <subcellularLocation>
        <location evidence="1">Cytoplasm</location>
    </subcellularLocation>
</comment>
<comment type="PTM">
    <text evidence="1">Is synthesized initially as an inactive proenzyme, which is activated by self-cleavage at a specific serine bond to produce a beta-subunit with a hydroxyl group at its C-terminus and an alpha-subunit with a pyruvoyl group at its N-terminus.</text>
</comment>
<comment type="similarity">
    <text evidence="1">Belongs to the PanD family.</text>
</comment>
<comment type="sequence caution" evidence="2">
    <conflict type="erroneous initiation">
        <sequence resource="EMBL-CDS" id="ABD31912"/>
    </conflict>
</comment>
<evidence type="ECO:0000255" key="1">
    <source>
        <dbReference type="HAMAP-Rule" id="MF_00446"/>
    </source>
</evidence>
<evidence type="ECO:0000305" key="2"/>
<feature type="chain" id="PRO_0000307071" description="Aspartate 1-decarboxylase beta chain" evidence="1">
    <location>
        <begin position="1"/>
        <end position="24"/>
    </location>
</feature>
<feature type="chain" id="PRO_0000307072" description="Aspartate 1-decarboxylase alpha chain" evidence="1">
    <location>
        <begin position="25"/>
        <end position="127"/>
    </location>
</feature>
<feature type="active site" description="Schiff-base intermediate with substrate; via pyruvic acid" evidence="1">
    <location>
        <position position="25"/>
    </location>
</feature>
<feature type="active site" description="Proton donor" evidence="1">
    <location>
        <position position="58"/>
    </location>
</feature>
<feature type="binding site" evidence="1">
    <location>
        <position position="57"/>
    </location>
    <ligand>
        <name>substrate</name>
    </ligand>
</feature>
<feature type="binding site" evidence="1">
    <location>
        <begin position="73"/>
        <end position="75"/>
    </location>
    <ligand>
        <name>substrate</name>
    </ligand>
</feature>
<feature type="modified residue" description="Pyruvic acid (Ser)" evidence="1">
    <location>
        <position position="25"/>
    </location>
</feature>
<keyword id="KW-0068">Autocatalytic cleavage</keyword>
<keyword id="KW-0963">Cytoplasm</keyword>
<keyword id="KW-0210">Decarboxylase</keyword>
<keyword id="KW-0456">Lyase</keyword>
<keyword id="KW-0566">Pantothenate biosynthesis</keyword>
<keyword id="KW-0670">Pyruvate</keyword>
<keyword id="KW-1185">Reference proteome</keyword>
<keyword id="KW-0704">Schiff base</keyword>
<keyword id="KW-0865">Zymogen</keyword>
<protein>
    <recommendedName>
        <fullName evidence="1">Aspartate 1-decarboxylase</fullName>
        <ecNumber evidence="1">4.1.1.11</ecNumber>
    </recommendedName>
    <alternativeName>
        <fullName evidence="1">Aspartate alpha-decarboxylase</fullName>
    </alternativeName>
    <component>
        <recommendedName>
            <fullName evidence="1">Aspartate 1-decarboxylase beta chain</fullName>
        </recommendedName>
    </component>
    <component>
        <recommendedName>
            <fullName evidence="1">Aspartate 1-decarboxylase alpha chain</fullName>
        </recommendedName>
    </component>
</protein>
<sequence length="127" mass="14050">MIRTMMNAKIHRARVTESNLNYVGSITIDSDILEAVDILPNEKVAIVNNNNGARFETYVIAGERGSGKICLNGAASRLVEVGDVVIIMTYAQLNEEEIKNHAPKVAVMNEDNVIIEMIHEKENTIVL</sequence>
<proteinExistence type="inferred from homology"/>
<reference key="1">
    <citation type="book" date="2006" name="Gram positive pathogens, 2nd edition">
        <title>The Staphylococcus aureus NCTC 8325 genome.</title>
        <editorList>
            <person name="Fischetti V."/>
            <person name="Novick R."/>
            <person name="Ferretti J."/>
            <person name="Portnoy D."/>
            <person name="Rood J."/>
        </editorList>
        <authorList>
            <person name="Gillaspy A.F."/>
            <person name="Worrell V."/>
            <person name="Orvis J."/>
            <person name="Roe B.A."/>
            <person name="Dyer D.W."/>
            <person name="Iandolo J.J."/>
        </authorList>
    </citation>
    <scope>NUCLEOTIDE SEQUENCE [LARGE SCALE GENOMIC DNA]</scope>
    <source>
        <strain>NCTC 8325 / PS 47</strain>
    </source>
</reference>
<name>PAND_STAA8</name>
<dbReference type="EC" id="4.1.1.11" evidence="1"/>
<dbReference type="EMBL" id="CP000253">
    <property type="protein sequence ID" value="ABD31912.1"/>
    <property type="status" value="ALT_INIT"/>
    <property type="molecule type" value="Genomic_DNA"/>
</dbReference>
<dbReference type="RefSeq" id="WP_000621532.1">
    <property type="nucleotide sequence ID" value="NZ_LS483365.1"/>
</dbReference>
<dbReference type="RefSeq" id="WP_001789904.1">
    <property type="nucleotide sequence ID" value="NC_007795.1"/>
</dbReference>
<dbReference type="RefSeq" id="YP_501369.1">
    <property type="nucleotide sequence ID" value="NC_007795.1"/>
</dbReference>
<dbReference type="SMR" id="Q2FV23"/>
<dbReference type="STRING" id="93061.SAOUHSC_02916"/>
<dbReference type="PaxDb" id="1280-SAXN108_2866"/>
<dbReference type="GeneID" id="3921368"/>
<dbReference type="GeneID" id="98346911"/>
<dbReference type="KEGG" id="sao:SAOUHSC_02916"/>
<dbReference type="PATRIC" id="fig|93061.5.peg.2636"/>
<dbReference type="eggNOG" id="COG0853">
    <property type="taxonomic scope" value="Bacteria"/>
</dbReference>
<dbReference type="HOGENOM" id="CLU_115305_2_0_9"/>
<dbReference type="OrthoDB" id="9803983at2"/>
<dbReference type="UniPathway" id="UPA00028">
    <property type="reaction ID" value="UER00002"/>
</dbReference>
<dbReference type="Proteomes" id="UP000008816">
    <property type="component" value="Chromosome"/>
</dbReference>
<dbReference type="GO" id="GO:0005829">
    <property type="term" value="C:cytosol"/>
    <property type="evidence" value="ECO:0000318"/>
    <property type="project" value="GO_Central"/>
</dbReference>
<dbReference type="GO" id="GO:0004068">
    <property type="term" value="F:aspartate 1-decarboxylase activity"/>
    <property type="evidence" value="ECO:0000318"/>
    <property type="project" value="GO_Central"/>
</dbReference>
<dbReference type="GO" id="GO:0006523">
    <property type="term" value="P:alanine biosynthetic process"/>
    <property type="evidence" value="ECO:0000318"/>
    <property type="project" value="GO_Central"/>
</dbReference>
<dbReference type="GO" id="GO:0015940">
    <property type="term" value="P:pantothenate biosynthetic process"/>
    <property type="evidence" value="ECO:0000318"/>
    <property type="project" value="GO_Central"/>
</dbReference>
<dbReference type="CDD" id="cd06919">
    <property type="entry name" value="Asp_decarbox"/>
    <property type="match status" value="1"/>
</dbReference>
<dbReference type="Gene3D" id="2.40.40.20">
    <property type="match status" value="1"/>
</dbReference>
<dbReference type="HAMAP" id="MF_00446">
    <property type="entry name" value="PanD"/>
    <property type="match status" value="1"/>
</dbReference>
<dbReference type="InterPro" id="IPR009010">
    <property type="entry name" value="Asp_de-COase-like_dom_sf"/>
</dbReference>
<dbReference type="InterPro" id="IPR003190">
    <property type="entry name" value="Asp_decarbox"/>
</dbReference>
<dbReference type="NCBIfam" id="TIGR00223">
    <property type="entry name" value="panD"/>
    <property type="match status" value="1"/>
</dbReference>
<dbReference type="PANTHER" id="PTHR21012">
    <property type="entry name" value="ASPARTATE 1-DECARBOXYLASE"/>
    <property type="match status" value="1"/>
</dbReference>
<dbReference type="PANTHER" id="PTHR21012:SF0">
    <property type="entry name" value="ASPARTATE 1-DECARBOXYLASE"/>
    <property type="match status" value="1"/>
</dbReference>
<dbReference type="Pfam" id="PF02261">
    <property type="entry name" value="Asp_decarbox"/>
    <property type="match status" value="1"/>
</dbReference>
<dbReference type="PIRSF" id="PIRSF006246">
    <property type="entry name" value="Asp_decarbox"/>
    <property type="match status" value="1"/>
</dbReference>
<dbReference type="SUPFAM" id="SSF50692">
    <property type="entry name" value="ADC-like"/>
    <property type="match status" value="1"/>
</dbReference>
<organism>
    <name type="scientific">Staphylococcus aureus (strain NCTC 8325 / PS 47)</name>
    <dbReference type="NCBI Taxonomy" id="93061"/>
    <lineage>
        <taxon>Bacteria</taxon>
        <taxon>Bacillati</taxon>
        <taxon>Bacillota</taxon>
        <taxon>Bacilli</taxon>
        <taxon>Bacillales</taxon>
        <taxon>Staphylococcaceae</taxon>
        <taxon>Staphylococcus</taxon>
    </lineage>
</organism>